<reference key="1">
    <citation type="journal article" date="2008" name="PLoS ONE">
        <title>Genetic basis of virulence attenuation revealed by comparative genomic analysis of Mycobacterium tuberculosis strain H37Ra versus H37Rv.</title>
        <authorList>
            <person name="Zheng H."/>
            <person name="Lu L."/>
            <person name="Wang B."/>
            <person name="Pu S."/>
            <person name="Zhang X."/>
            <person name="Zhu G."/>
            <person name="Shi W."/>
            <person name="Zhang L."/>
            <person name="Wang H."/>
            <person name="Wang S."/>
            <person name="Zhao G."/>
            <person name="Zhang Y."/>
        </authorList>
    </citation>
    <scope>NUCLEOTIDE SEQUENCE [LARGE SCALE GENOMIC DNA]</scope>
    <source>
        <strain>ATCC 25177 / H37Ra</strain>
    </source>
</reference>
<name>TRPC_MYCTA</name>
<organism>
    <name type="scientific">Mycobacterium tuberculosis (strain ATCC 25177 / H37Ra)</name>
    <dbReference type="NCBI Taxonomy" id="419947"/>
    <lineage>
        <taxon>Bacteria</taxon>
        <taxon>Bacillati</taxon>
        <taxon>Actinomycetota</taxon>
        <taxon>Actinomycetes</taxon>
        <taxon>Mycobacteriales</taxon>
        <taxon>Mycobacteriaceae</taxon>
        <taxon>Mycobacterium</taxon>
        <taxon>Mycobacterium tuberculosis complex</taxon>
    </lineage>
</organism>
<dbReference type="EC" id="4.1.1.48" evidence="1"/>
<dbReference type="EMBL" id="CP000611">
    <property type="protein sequence ID" value="ABQ73367.1"/>
    <property type="molecule type" value="Genomic_DNA"/>
</dbReference>
<dbReference type="RefSeq" id="WP_003407990.1">
    <property type="nucleotide sequence ID" value="NZ_CP016972.1"/>
</dbReference>
<dbReference type="SMR" id="A5U2W7"/>
<dbReference type="KEGG" id="mra:MRA_1621"/>
<dbReference type="eggNOG" id="COG0134">
    <property type="taxonomic scope" value="Bacteria"/>
</dbReference>
<dbReference type="HOGENOM" id="CLU_034247_0_0_11"/>
<dbReference type="BRENDA" id="4.1.1.48">
    <property type="organism ID" value="10655"/>
</dbReference>
<dbReference type="UniPathway" id="UPA00035">
    <property type="reaction ID" value="UER00043"/>
</dbReference>
<dbReference type="Proteomes" id="UP000001988">
    <property type="component" value="Chromosome"/>
</dbReference>
<dbReference type="GO" id="GO:0004425">
    <property type="term" value="F:indole-3-glycerol-phosphate synthase activity"/>
    <property type="evidence" value="ECO:0007669"/>
    <property type="project" value="UniProtKB-UniRule"/>
</dbReference>
<dbReference type="GO" id="GO:0004640">
    <property type="term" value="F:phosphoribosylanthranilate isomerase activity"/>
    <property type="evidence" value="ECO:0007669"/>
    <property type="project" value="TreeGrafter"/>
</dbReference>
<dbReference type="GO" id="GO:0000162">
    <property type="term" value="P:L-tryptophan biosynthetic process"/>
    <property type="evidence" value="ECO:0007669"/>
    <property type="project" value="UniProtKB-UniRule"/>
</dbReference>
<dbReference type="CDD" id="cd00331">
    <property type="entry name" value="IGPS"/>
    <property type="match status" value="1"/>
</dbReference>
<dbReference type="FunFam" id="3.20.20.70:FF:000024">
    <property type="entry name" value="Indole-3-glycerol phosphate synthase"/>
    <property type="match status" value="1"/>
</dbReference>
<dbReference type="Gene3D" id="3.20.20.70">
    <property type="entry name" value="Aldolase class I"/>
    <property type="match status" value="1"/>
</dbReference>
<dbReference type="HAMAP" id="MF_00134_B">
    <property type="entry name" value="IGPS_B"/>
    <property type="match status" value="1"/>
</dbReference>
<dbReference type="InterPro" id="IPR013785">
    <property type="entry name" value="Aldolase_TIM"/>
</dbReference>
<dbReference type="InterPro" id="IPR045186">
    <property type="entry name" value="Indole-3-glycerol_P_synth"/>
</dbReference>
<dbReference type="InterPro" id="IPR013798">
    <property type="entry name" value="Indole-3-glycerol_P_synth_dom"/>
</dbReference>
<dbReference type="InterPro" id="IPR001468">
    <property type="entry name" value="Indole-3-GlycerolPSynthase_CS"/>
</dbReference>
<dbReference type="InterPro" id="IPR011060">
    <property type="entry name" value="RibuloseP-bd_barrel"/>
</dbReference>
<dbReference type="NCBIfam" id="NF001369">
    <property type="entry name" value="PRK00278.1-1"/>
    <property type="match status" value="1"/>
</dbReference>
<dbReference type="NCBIfam" id="NF001377">
    <property type="entry name" value="PRK00278.2-4"/>
    <property type="match status" value="1"/>
</dbReference>
<dbReference type="PANTHER" id="PTHR22854:SF2">
    <property type="entry name" value="INDOLE-3-GLYCEROL-PHOSPHATE SYNTHASE"/>
    <property type="match status" value="1"/>
</dbReference>
<dbReference type="PANTHER" id="PTHR22854">
    <property type="entry name" value="TRYPTOPHAN BIOSYNTHESIS PROTEIN"/>
    <property type="match status" value="1"/>
</dbReference>
<dbReference type="Pfam" id="PF00218">
    <property type="entry name" value="IGPS"/>
    <property type="match status" value="1"/>
</dbReference>
<dbReference type="SUPFAM" id="SSF51366">
    <property type="entry name" value="Ribulose-phoshate binding barrel"/>
    <property type="match status" value="1"/>
</dbReference>
<dbReference type="PROSITE" id="PS00614">
    <property type="entry name" value="IGPS"/>
    <property type="match status" value="1"/>
</dbReference>
<protein>
    <recommendedName>
        <fullName evidence="1">Indole-3-glycerol phosphate synthase</fullName>
        <shortName evidence="1">IGPS</shortName>
        <ecNumber evidence="1">4.1.1.48</ecNumber>
    </recommendedName>
</protein>
<sequence length="272" mass="28023">MSPATVLDSILEGVRADVAAREASVSLSEIKAAAAAAPPPLDVMAALREPGIGVIAEVKRASPSAGALATIADPAKLAQAYQDGGARIVSVVTEQRRFQGSLDDLDAVRASVSIPVLRKDFVVQPYQIHEARAHGADMLLLIVAALEQSVLVSMLDRTESLGMTALVEVHTEQEADRALKAGAKVIGVNARDLMTLDVDRDCFARIAPGLPSSVIRIAESGVRGTADLLAYAGAGADAVLVGEGLVTSGDPRAAVADLVTAGTHPSCPKPAR</sequence>
<gene>
    <name evidence="1" type="primary">trpC</name>
    <name type="ordered locus">MRA_1621</name>
</gene>
<accession>A5U2W7</accession>
<comment type="catalytic activity">
    <reaction evidence="1">
        <text>1-(2-carboxyphenylamino)-1-deoxy-D-ribulose 5-phosphate + H(+) = (1S,2R)-1-C-(indol-3-yl)glycerol 3-phosphate + CO2 + H2O</text>
        <dbReference type="Rhea" id="RHEA:23476"/>
        <dbReference type="ChEBI" id="CHEBI:15377"/>
        <dbReference type="ChEBI" id="CHEBI:15378"/>
        <dbReference type="ChEBI" id="CHEBI:16526"/>
        <dbReference type="ChEBI" id="CHEBI:58613"/>
        <dbReference type="ChEBI" id="CHEBI:58866"/>
        <dbReference type="EC" id="4.1.1.48"/>
    </reaction>
</comment>
<comment type="pathway">
    <text evidence="1">Amino-acid biosynthesis; L-tryptophan biosynthesis; L-tryptophan from chorismate: step 4/5.</text>
</comment>
<comment type="similarity">
    <text evidence="1">Belongs to the TrpC family.</text>
</comment>
<feature type="chain" id="PRO_1000018505" description="Indole-3-glycerol phosphate synthase">
    <location>
        <begin position="1"/>
        <end position="272"/>
    </location>
</feature>
<keyword id="KW-0028">Amino-acid biosynthesis</keyword>
<keyword id="KW-0057">Aromatic amino acid biosynthesis</keyword>
<keyword id="KW-0210">Decarboxylase</keyword>
<keyword id="KW-0456">Lyase</keyword>
<keyword id="KW-1185">Reference proteome</keyword>
<keyword id="KW-0822">Tryptophan biosynthesis</keyword>
<evidence type="ECO:0000255" key="1">
    <source>
        <dbReference type="HAMAP-Rule" id="MF_00134"/>
    </source>
</evidence>
<proteinExistence type="inferred from homology"/>